<organism>
    <name type="scientific">Homo sapiens</name>
    <name type="common">Human</name>
    <dbReference type="NCBI Taxonomy" id="9606"/>
    <lineage>
        <taxon>Eukaryota</taxon>
        <taxon>Metazoa</taxon>
        <taxon>Chordata</taxon>
        <taxon>Craniata</taxon>
        <taxon>Vertebrata</taxon>
        <taxon>Euteleostomi</taxon>
        <taxon>Mammalia</taxon>
        <taxon>Eutheria</taxon>
        <taxon>Euarchontoglires</taxon>
        <taxon>Primates</taxon>
        <taxon>Haplorrhini</taxon>
        <taxon>Catarrhini</taxon>
        <taxon>Hominidae</taxon>
        <taxon>Homo</taxon>
    </lineage>
</organism>
<keyword id="KW-0002">3D-structure</keyword>
<keyword id="KW-0145">Chemotaxis</keyword>
<keyword id="KW-0202">Cytokine</keyword>
<keyword id="KW-0903">Direct protein sequencing</keyword>
<keyword id="KW-1015">Disulfide bond</keyword>
<keyword id="KW-0325">Glycoprotein</keyword>
<keyword id="KW-1267">Proteomics identification</keyword>
<keyword id="KW-1185">Reference proteome</keyword>
<keyword id="KW-0964">Secreted</keyword>
<keyword id="KW-0732">Signal</keyword>
<reference key="1">
    <citation type="journal article" date="1989" name="J. Immunol.">
        <title>A novel polypeptide secreted by activated human T lymphocytes.</title>
        <authorList>
            <person name="Miller M.D."/>
            <person name="Hata S."/>
            <person name="Waal Malefyt R."/>
            <person name="Krangel M.S."/>
        </authorList>
    </citation>
    <scope>NUCLEOTIDE SEQUENCE [MRNA]</scope>
</reference>
<reference key="2">
    <citation type="journal article" date="1990" name="J. Immunol.">
        <title>Sequence and chromosomal location of the I-309 gene. Relationship to genes encoding a family of inflammatory cytokines.</title>
        <authorList>
            <person name="Miller M.D."/>
            <person name="Wilson S.D."/>
            <person name="Dorf M.E."/>
            <person name="Seuanez H.N."/>
            <person name="O'Brien S.J."/>
            <person name="Krangel M.S."/>
        </authorList>
    </citation>
    <scope>NUCLEOTIDE SEQUENCE [GENOMIC DNA]</scope>
</reference>
<reference key="3">
    <citation type="journal article" date="2004" name="Nat. Genet.">
        <title>Complete sequencing and characterization of 21,243 full-length human cDNAs.</title>
        <authorList>
            <person name="Ota T."/>
            <person name="Suzuki Y."/>
            <person name="Nishikawa T."/>
            <person name="Otsuki T."/>
            <person name="Sugiyama T."/>
            <person name="Irie R."/>
            <person name="Wakamatsu A."/>
            <person name="Hayashi K."/>
            <person name="Sato H."/>
            <person name="Nagai K."/>
            <person name="Kimura K."/>
            <person name="Makita H."/>
            <person name="Sekine M."/>
            <person name="Obayashi M."/>
            <person name="Nishi T."/>
            <person name="Shibahara T."/>
            <person name="Tanaka T."/>
            <person name="Ishii S."/>
            <person name="Yamamoto J."/>
            <person name="Saito K."/>
            <person name="Kawai Y."/>
            <person name="Isono Y."/>
            <person name="Nakamura Y."/>
            <person name="Nagahari K."/>
            <person name="Murakami K."/>
            <person name="Yasuda T."/>
            <person name="Iwayanagi T."/>
            <person name="Wagatsuma M."/>
            <person name="Shiratori A."/>
            <person name="Sudo H."/>
            <person name="Hosoiri T."/>
            <person name="Kaku Y."/>
            <person name="Kodaira H."/>
            <person name="Kondo H."/>
            <person name="Sugawara M."/>
            <person name="Takahashi M."/>
            <person name="Kanda K."/>
            <person name="Yokoi T."/>
            <person name="Furuya T."/>
            <person name="Kikkawa E."/>
            <person name="Omura Y."/>
            <person name="Abe K."/>
            <person name="Kamihara K."/>
            <person name="Katsuta N."/>
            <person name="Sato K."/>
            <person name="Tanikawa M."/>
            <person name="Yamazaki M."/>
            <person name="Ninomiya K."/>
            <person name="Ishibashi T."/>
            <person name="Yamashita H."/>
            <person name="Murakawa K."/>
            <person name="Fujimori K."/>
            <person name="Tanai H."/>
            <person name="Kimata M."/>
            <person name="Watanabe M."/>
            <person name="Hiraoka S."/>
            <person name="Chiba Y."/>
            <person name="Ishida S."/>
            <person name="Ono Y."/>
            <person name="Takiguchi S."/>
            <person name="Watanabe S."/>
            <person name="Yosida M."/>
            <person name="Hotuta T."/>
            <person name="Kusano J."/>
            <person name="Kanehori K."/>
            <person name="Takahashi-Fujii A."/>
            <person name="Hara H."/>
            <person name="Tanase T.-O."/>
            <person name="Nomura Y."/>
            <person name="Togiya S."/>
            <person name="Komai F."/>
            <person name="Hara R."/>
            <person name="Takeuchi K."/>
            <person name="Arita M."/>
            <person name="Imose N."/>
            <person name="Musashino K."/>
            <person name="Yuuki H."/>
            <person name="Oshima A."/>
            <person name="Sasaki N."/>
            <person name="Aotsuka S."/>
            <person name="Yoshikawa Y."/>
            <person name="Matsunawa H."/>
            <person name="Ichihara T."/>
            <person name="Shiohata N."/>
            <person name="Sano S."/>
            <person name="Moriya S."/>
            <person name="Momiyama H."/>
            <person name="Satoh N."/>
            <person name="Takami S."/>
            <person name="Terashima Y."/>
            <person name="Suzuki O."/>
            <person name="Nakagawa S."/>
            <person name="Senoh A."/>
            <person name="Mizoguchi H."/>
            <person name="Goto Y."/>
            <person name="Shimizu F."/>
            <person name="Wakebe H."/>
            <person name="Hishigaki H."/>
            <person name="Watanabe T."/>
            <person name="Sugiyama A."/>
            <person name="Takemoto M."/>
            <person name="Kawakami B."/>
            <person name="Yamazaki M."/>
            <person name="Watanabe K."/>
            <person name="Kumagai A."/>
            <person name="Itakura S."/>
            <person name="Fukuzumi Y."/>
            <person name="Fujimori Y."/>
            <person name="Komiyama M."/>
            <person name="Tashiro H."/>
            <person name="Tanigami A."/>
            <person name="Fujiwara T."/>
            <person name="Ono T."/>
            <person name="Yamada K."/>
            <person name="Fujii Y."/>
            <person name="Ozaki K."/>
            <person name="Hirao M."/>
            <person name="Ohmori Y."/>
            <person name="Kawabata A."/>
            <person name="Hikiji T."/>
            <person name="Kobatake N."/>
            <person name="Inagaki H."/>
            <person name="Ikema Y."/>
            <person name="Okamoto S."/>
            <person name="Okitani R."/>
            <person name="Kawakami T."/>
            <person name="Noguchi S."/>
            <person name="Itoh T."/>
            <person name="Shigeta K."/>
            <person name="Senba T."/>
            <person name="Matsumura K."/>
            <person name="Nakajima Y."/>
            <person name="Mizuno T."/>
            <person name="Morinaga M."/>
            <person name="Sasaki M."/>
            <person name="Togashi T."/>
            <person name="Oyama M."/>
            <person name="Hata H."/>
            <person name="Watanabe M."/>
            <person name="Komatsu T."/>
            <person name="Mizushima-Sugano J."/>
            <person name="Satoh T."/>
            <person name="Shirai Y."/>
            <person name="Takahashi Y."/>
            <person name="Nakagawa K."/>
            <person name="Okumura K."/>
            <person name="Nagase T."/>
            <person name="Nomura N."/>
            <person name="Kikuchi H."/>
            <person name="Masuho Y."/>
            <person name="Yamashita R."/>
            <person name="Nakai K."/>
            <person name="Yada T."/>
            <person name="Nakamura Y."/>
            <person name="Ohara O."/>
            <person name="Isogai T."/>
            <person name="Sugano S."/>
        </authorList>
    </citation>
    <scope>NUCLEOTIDE SEQUENCE [LARGE SCALE MRNA]</scope>
</reference>
<reference key="4">
    <citation type="submission" date="2005-09" db="EMBL/GenBank/DDBJ databases">
        <authorList>
            <person name="Mural R.J."/>
            <person name="Istrail S."/>
            <person name="Sutton G.G."/>
            <person name="Florea L."/>
            <person name="Halpern A.L."/>
            <person name="Mobarry C.M."/>
            <person name="Lippert R."/>
            <person name="Walenz B."/>
            <person name="Shatkay H."/>
            <person name="Dew I."/>
            <person name="Miller J.R."/>
            <person name="Flanigan M.J."/>
            <person name="Edwards N.J."/>
            <person name="Bolanos R."/>
            <person name="Fasulo D."/>
            <person name="Halldorsson B.V."/>
            <person name="Hannenhalli S."/>
            <person name="Turner R."/>
            <person name="Yooseph S."/>
            <person name="Lu F."/>
            <person name="Nusskern D.R."/>
            <person name="Shue B.C."/>
            <person name="Zheng X.H."/>
            <person name="Zhong F."/>
            <person name="Delcher A.L."/>
            <person name="Huson D.H."/>
            <person name="Kravitz S.A."/>
            <person name="Mouchard L."/>
            <person name="Reinert K."/>
            <person name="Remington K.A."/>
            <person name="Clark A.G."/>
            <person name="Waterman M.S."/>
            <person name="Eichler E.E."/>
            <person name="Adams M.D."/>
            <person name="Hunkapiller M.W."/>
            <person name="Myers E.W."/>
            <person name="Venter J.C."/>
        </authorList>
    </citation>
    <scope>NUCLEOTIDE SEQUENCE [LARGE SCALE GENOMIC DNA]</scope>
</reference>
<reference key="5">
    <citation type="journal article" date="2004" name="Genome Res.">
        <title>The status, quality, and expansion of the NIH full-length cDNA project: the Mammalian Gene Collection (MGC).</title>
        <authorList>
            <consortium name="The MGC Project Team"/>
        </authorList>
    </citation>
    <scope>NUCLEOTIDE SEQUENCE [LARGE SCALE MRNA]</scope>
    <source>
        <tissue>Brain</tissue>
    </source>
</reference>
<reference key="6">
    <citation type="journal article" date="2004" name="Protein Sci.">
        <title>Signal peptide prediction based on analysis of experimentally verified cleavage sites.</title>
        <authorList>
            <person name="Zhang Z."/>
            <person name="Henzel W.J."/>
        </authorList>
    </citation>
    <scope>PROTEIN SEQUENCE OF 24-38</scope>
</reference>
<reference key="7">
    <citation type="journal article" date="1992" name="Proc. Natl. Acad. Sci. U.S.A.">
        <title>The human cytokine I-309 is a monocyte chemoattractant.</title>
        <authorList>
            <person name="Miller M.D."/>
            <person name="Krangel M.S."/>
        </authorList>
    </citation>
    <scope>FUNCTION</scope>
    <scope>SIGNAL SEQUENCE CLEAVAGE SITE</scope>
</reference>
<reference key="8">
    <citation type="journal article" date="2000" name="Biochemistry">
        <title>Human CC chemokine I-309, structural consequences of the additional disulfide bond.</title>
        <authorList>
            <person name="Keizer D.W."/>
            <person name="Crump M.P."/>
            <person name="Lee T.W."/>
            <person name="Slupsky C.M."/>
            <person name="Clark-Lewis I."/>
            <person name="Sykes B.D."/>
        </authorList>
    </citation>
    <scope>STRUCTURE BY NMR OF 23-96</scope>
</reference>
<evidence type="ECO:0000255" key="1"/>
<evidence type="ECO:0000269" key="2">
    <source>
    </source>
</evidence>
<evidence type="ECO:0000269" key="3">
    <source>
    </source>
</evidence>
<evidence type="ECO:0000305" key="4"/>
<evidence type="ECO:0007829" key="5">
    <source>
        <dbReference type="PDB" id="1EL0"/>
    </source>
</evidence>
<evidence type="ECO:0007829" key="6">
    <source>
        <dbReference type="PDB" id="4OIJ"/>
    </source>
</evidence>
<dbReference type="EMBL" id="M57502">
    <property type="protein sequence ID" value="AAA61196.1"/>
    <property type="molecule type" value="mRNA"/>
</dbReference>
<dbReference type="EMBL" id="M57506">
    <property type="protein sequence ID" value="AAA52705.1"/>
    <property type="molecule type" value="Genomic_DNA"/>
</dbReference>
<dbReference type="EMBL" id="AK312183">
    <property type="protein sequence ID" value="BAG35116.1"/>
    <property type="molecule type" value="mRNA"/>
</dbReference>
<dbReference type="EMBL" id="CH471147">
    <property type="protein sequence ID" value="EAW80204.1"/>
    <property type="molecule type" value="Genomic_DNA"/>
</dbReference>
<dbReference type="EMBL" id="BC105073">
    <property type="protein sequence ID" value="AAI05074.1"/>
    <property type="molecule type" value="mRNA"/>
</dbReference>
<dbReference type="EMBL" id="BC105075">
    <property type="protein sequence ID" value="AAI05076.1"/>
    <property type="molecule type" value="mRNA"/>
</dbReference>
<dbReference type="CCDS" id="CCDS11282.1"/>
<dbReference type="PIR" id="A37236">
    <property type="entry name" value="A37236"/>
</dbReference>
<dbReference type="RefSeq" id="NP_002972.1">
    <property type="nucleotide sequence ID" value="NM_002981.2"/>
</dbReference>
<dbReference type="PDB" id="1EL0">
    <property type="method" value="NMR"/>
    <property type="chains" value="A=23-96"/>
</dbReference>
<dbReference type="PDB" id="4OIJ">
    <property type="method" value="X-ray"/>
    <property type="resolution" value="2.00 A"/>
    <property type="chains" value="A/B=23-96"/>
</dbReference>
<dbReference type="PDB" id="4OIK">
    <property type="method" value="X-ray"/>
    <property type="resolution" value="2.10 A"/>
    <property type="chains" value="A/B=23-96"/>
</dbReference>
<dbReference type="PDB" id="8U1U">
    <property type="method" value="EM"/>
    <property type="resolution" value="3.10 A"/>
    <property type="chains" value="A=24-96"/>
</dbReference>
<dbReference type="PDBsum" id="1EL0"/>
<dbReference type="PDBsum" id="4OIJ"/>
<dbReference type="PDBsum" id="4OIK"/>
<dbReference type="PDBsum" id="8U1U"/>
<dbReference type="BMRB" id="P22362"/>
<dbReference type="SMR" id="P22362"/>
<dbReference type="BioGRID" id="112250">
    <property type="interactions" value="5"/>
</dbReference>
<dbReference type="DIP" id="DIP-5835N"/>
<dbReference type="FunCoup" id="P22362">
    <property type="interactions" value="570"/>
</dbReference>
<dbReference type="IntAct" id="P22362">
    <property type="interactions" value="1"/>
</dbReference>
<dbReference type="STRING" id="9606.ENSP00000225842"/>
<dbReference type="GlyCosmos" id="P22362">
    <property type="glycosylation" value="1 site, No reported glycans"/>
</dbReference>
<dbReference type="GlyGen" id="P22362">
    <property type="glycosylation" value="1 site"/>
</dbReference>
<dbReference type="BioMuta" id="CCL1"/>
<dbReference type="DMDM" id="123950"/>
<dbReference type="MassIVE" id="P22362"/>
<dbReference type="PaxDb" id="9606-ENSP00000225842"/>
<dbReference type="PeptideAtlas" id="P22362"/>
<dbReference type="Antibodypedia" id="15502">
    <property type="antibodies" value="314 antibodies from 31 providers"/>
</dbReference>
<dbReference type="DNASU" id="6346"/>
<dbReference type="Ensembl" id="ENST00000225842.4">
    <property type="protein sequence ID" value="ENSP00000225842.3"/>
    <property type="gene ID" value="ENSG00000108702.4"/>
</dbReference>
<dbReference type="GeneID" id="6346"/>
<dbReference type="KEGG" id="hsa:6346"/>
<dbReference type="MANE-Select" id="ENST00000225842.4">
    <property type="protein sequence ID" value="ENSP00000225842.3"/>
    <property type="RefSeq nucleotide sequence ID" value="NM_002981.2"/>
    <property type="RefSeq protein sequence ID" value="NP_002972.1"/>
</dbReference>
<dbReference type="UCSC" id="uc002hid.3">
    <property type="organism name" value="human"/>
</dbReference>
<dbReference type="AGR" id="HGNC:10609"/>
<dbReference type="CTD" id="6346"/>
<dbReference type="DisGeNET" id="6346"/>
<dbReference type="GeneCards" id="CCL1"/>
<dbReference type="HGNC" id="HGNC:10609">
    <property type="gene designation" value="CCL1"/>
</dbReference>
<dbReference type="HPA" id="ENSG00000108702">
    <property type="expression patterns" value="Group enriched (intestine, lymphoid tissue)"/>
</dbReference>
<dbReference type="MIM" id="182281">
    <property type="type" value="gene"/>
</dbReference>
<dbReference type="neXtProt" id="NX_P22362"/>
<dbReference type="OpenTargets" id="ENSG00000108702"/>
<dbReference type="PharmGKB" id="PA35542"/>
<dbReference type="VEuPathDB" id="HostDB:ENSG00000108702"/>
<dbReference type="eggNOG" id="ENOG502SZRS">
    <property type="taxonomic scope" value="Eukaryota"/>
</dbReference>
<dbReference type="GeneTree" id="ENSGT01100000263482"/>
<dbReference type="HOGENOM" id="CLU_141716_5_0_1"/>
<dbReference type="InParanoid" id="P22362"/>
<dbReference type="OMA" id="SSNCCFT"/>
<dbReference type="OrthoDB" id="9447832at2759"/>
<dbReference type="PAN-GO" id="P22362">
    <property type="GO annotations" value="15 GO annotations based on evolutionary models"/>
</dbReference>
<dbReference type="PhylomeDB" id="P22362"/>
<dbReference type="TreeFam" id="TF334888"/>
<dbReference type="PathwayCommons" id="P22362"/>
<dbReference type="Reactome" id="R-HSA-380108">
    <property type="pathway name" value="Chemokine receptors bind chemokines"/>
</dbReference>
<dbReference type="Reactome" id="R-HSA-418594">
    <property type="pathway name" value="G alpha (i) signalling events"/>
</dbReference>
<dbReference type="SignaLink" id="P22362"/>
<dbReference type="SIGNOR" id="P22362"/>
<dbReference type="BioGRID-ORCS" id="6346">
    <property type="hits" value="14 hits in 1138 CRISPR screens"/>
</dbReference>
<dbReference type="EvolutionaryTrace" id="P22362"/>
<dbReference type="GenomeRNAi" id="6346"/>
<dbReference type="Pharos" id="P22362">
    <property type="development level" value="Tbio"/>
</dbReference>
<dbReference type="PRO" id="PR:P22362"/>
<dbReference type="Proteomes" id="UP000005640">
    <property type="component" value="Chromosome 17"/>
</dbReference>
<dbReference type="RNAct" id="P22362">
    <property type="molecule type" value="protein"/>
</dbReference>
<dbReference type="Bgee" id="ENSG00000108702">
    <property type="expression patterns" value="Expressed in male germ line stem cell (sensu Vertebrata) in testis and 48 other cell types or tissues"/>
</dbReference>
<dbReference type="GO" id="GO:0005576">
    <property type="term" value="C:extracellular region"/>
    <property type="evidence" value="ECO:0000304"/>
    <property type="project" value="Reactome"/>
</dbReference>
<dbReference type="GO" id="GO:0005615">
    <property type="term" value="C:extracellular space"/>
    <property type="evidence" value="ECO:0000314"/>
    <property type="project" value="CAFA"/>
</dbReference>
<dbReference type="GO" id="GO:0048020">
    <property type="term" value="F:CCR chemokine receptor binding"/>
    <property type="evidence" value="ECO:0000318"/>
    <property type="project" value="GO_Central"/>
</dbReference>
<dbReference type="GO" id="GO:0008009">
    <property type="term" value="F:chemokine activity"/>
    <property type="evidence" value="ECO:0000314"/>
    <property type="project" value="CAFA"/>
</dbReference>
<dbReference type="GO" id="GO:0061844">
    <property type="term" value="P:antimicrobial humoral immune response mediated by antimicrobial peptide"/>
    <property type="evidence" value="ECO:0000318"/>
    <property type="project" value="GO_Central"/>
</dbReference>
<dbReference type="GO" id="GO:0070098">
    <property type="term" value="P:chemokine-mediated signaling pathway"/>
    <property type="evidence" value="ECO:0000318"/>
    <property type="project" value="GO_Central"/>
</dbReference>
<dbReference type="GO" id="GO:0006935">
    <property type="term" value="P:chemotaxis"/>
    <property type="evidence" value="ECO:0000304"/>
    <property type="project" value="ProtInc"/>
</dbReference>
<dbReference type="GO" id="GO:0048245">
    <property type="term" value="P:eosinophil chemotaxis"/>
    <property type="evidence" value="ECO:0000318"/>
    <property type="project" value="GO_Central"/>
</dbReference>
<dbReference type="GO" id="GO:0006954">
    <property type="term" value="P:inflammatory response"/>
    <property type="evidence" value="ECO:0000318"/>
    <property type="project" value="GO_Central"/>
</dbReference>
<dbReference type="GO" id="GO:0006874">
    <property type="term" value="P:intracellular calcium ion homeostasis"/>
    <property type="evidence" value="ECO:0000304"/>
    <property type="project" value="ProtInc"/>
</dbReference>
<dbReference type="GO" id="GO:0030335">
    <property type="term" value="P:positive regulation of cell migration"/>
    <property type="evidence" value="ECO:0000318"/>
    <property type="project" value="GO_Central"/>
</dbReference>
<dbReference type="GO" id="GO:0007204">
    <property type="term" value="P:positive regulation of cytosolic calcium ion concentration"/>
    <property type="evidence" value="ECO:0000314"/>
    <property type="project" value="CAFA"/>
</dbReference>
<dbReference type="GO" id="GO:0050729">
    <property type="term" value="P:positive regulation of inflammatory response"/>
    <property type="evidence" value="ECO:0000314"/>
    <property type="project" value="BHF-UCL"/>
</dbReference>
<dbReference type="GO" id="GO:0032740">
    <property type="term" value="P:positive regulation of interleukin-17 production"/>
    <property type="evidence" value="ECO:0000314"/>
    <property type="project" value="BHF-UCL"/>
</dbReference>
<dbReference type="GO" id="GO:0090026">
    <property type="term" value="P:positive regulation of monocyte chemotaxis"/>
    <property type="evidence" value="ECO:0000314"/>
    <property type="project" value="CAFA"/>
</dbReference>
<dbReference type="GO" id="GO:0007165">
    <property type="term" value="P:signal transduction"/>
    <property type="evidence" value="ECO:0000304"/>
    <property type="project" value="ProtInc"/>
</dbReference>
<dbReference type="GO" id="GO:0016032">
    <property type="term" value="P:viral process"/>
    <property type="evidence" value="ECO:0000304"/>
    <property type="project" value="ProtInc"/>
</dbReference>
<dbReference type="CDD" id="cd00272">
    <property type="entry name" value="Chemokine_CC"/>
    <property type="match status" value="1"/>
</dbReference>
<dbReference type="FunFam" id="2.40.50.40:FF:000033">
    <property type="entry name" value="C-C motif chemokine 1"/>
    <property type="match status" value="1"/>
</dbReference>
<dbReference type="Gene3D" id="2.40.50.40">
    <property type="match status" value="1"/>
</dbReference>
<dbReference type="InterPro" id="IPR039809">
    <property type="entry name" value="Chemokine_b/g/d"/>
</dbReference>
<dbReference type="InterPro" id="IPR000827">
    <property type="entry name" value="Chemokine_CC_CS"/>
</dbReference>
<dbReference type="InterPro" id="IPR001811">
    <property type="entry name" value="Chemokine_IL8-like_dom"/>
</dbReference>
<dbReference type="InterPro" id="IPR036048">
    <property type="entry name" value="Interleukin_8-like_sf"/>
</dbReference>
<dbReference type="PANTHER" id="PTHR12015:SF5">
    <property type="entry name" value="C-C MOTIF CHEMOKINE 1"/>
    <property type="match status" value="1"/>
</dbReference>
<dbReference type="PANTHER" id="PTHR12015">
    <property type="entry name" value="SMALL INDUCIBLE CYTOKINE A"/>
    <property type="match status" value="1"/>
</dbReference>
<dbReference type="Pfam" id="PF00048">
    <property type="entry name" value="IL8"/>
    <property type="match status" value="1"/>
</dbReference>
<dbReference type="SMART" id="SM00199">
    <property type="entry name" value="SCY"/>
    <property type="match status" value="1"/>
</dbReference>
<dbReference type="SUPFAM" id="SSF54117">
    <property type="entry name" value="Interleukin 8-like chemokines"/>
    <property type="match status" value="1"/>
</dbReference>
<dbReference type="PROSITE" id="PS00472">
    <property type="entry name" value="SMALL_CYTOKINES_CC"/>
    <property type="match status" value="1"/>
</dbReference>
<gene>
    <name type="primary">CCL1</name>
    <name type="synonym">SCYA1</name>
</gene>
<sequence length="96" mass="10992">MQIITTALVCLLLAGMWPEDVDSKSMQVPFSRCCFSFAEQEIPLRAILCYRNTSSICSNEGLIFKLKRGKEACALDTVGWVQRHRKMLRHCPSKRK</sequence>
<name>CCL1_HUMAN</name>
<proteinExistence type="evidence at protein level"/>
<protein>
    <recommendedName>
        <fullName>C-C motif chemokine 1</fullName>
    </recommendedName>
    <alternativeName>
        <fullName>Small-inducible cytokine A1</fullName>
    </alternativeName>
    <alternativeName>
        <fullName>T lymphocyte-secreted protein I-309</fullName>
    </alternativeName>
</protein>
<feature type="signal peptide" evidence="2 3">
    <location>
        <begin position="1"/>
        <end position="23"/>
    </location>
</feature>
<feature type="chain" id="PRO_0000005141" description="C-C motif chemokine 1">
    <location>
        <begin position="24"/>
        <end position="96"/>
    </location>
</feature>
<feature type="glycosylation site" description="N-linked (GlcNAc...) asparagine" evidence="1">
    <location>
        <position position="52"/>
    </location>
</feature>
<feature type="disulfide bond">
    <location>
        <begin position="33"/>
        <end position="57"/>
    </location>
</feature>
<feature type="disulfide bond">
    <location>
        <begin position="34"/>
        <end position="73"/>
    </location>
</feature>
<feature type="disulfide bond">
    <location>
        <begin position="49"/>
        <end position="91"/>
    </location>
</feature>
<feature type="strand" evidence="5">
    <location>
        <begin position="28"/>
        <end position="30"/>
    </location>
</feature>
<feature type="strand" evidence="6">
    <location>
        <begin position="31"/>
        <end position="33"/>
    </location>
</feature>
<feature type="helix" evidence="6">
    <location>
        <begin position="44"/>
        <end position="46"/>
    </location>
</feature>
<feature type="strand" evidence="6">
    <location>
        <begin position="47"/>
        <end position="52"/>
    </location>
</feature>
<feature type="helix" evidence="6">
    <location>
        <begin position="55"/>
        <end position="57"/>
    </location>
</feature>
<feature type="strand" evidence="6">
    <location>
        <begin position="61"/>
        <end position="67"/>
    </location>
</feature>
<feature type="strand" evidence="6">
    <location>
        <begin position="71"/>
        <end position="75"/>
    </location>
</feature>
<feature type="helix" evidence="6">
    <location>
        <begin position="79"/>
        <end position="86"/>
    </location>
</feature>
<comment type="function">
    <text evidence="3">Cytokine that is chemotactic for monocytes but not for neutrophils. Binds to CCR8.</text>
</comment>
<comment type="subunit">
    <text>Monomer.</text>
</comment>
<comment type="subcellular location">
    <subcellularLocation>
        <location>Secreted</location>
    </subcellularLocation>
</comment>
<comment type="induction">
    <text>By phorbol myristate acetate (PMA).</text>
</comment>
<comment type="similarity">
    <text evidence="4">Belongs to the intercrine beta (chemokine CC) family.</text>
</comment>
<comment type="online information" name="Wikipedia">
    <link uri="https://en.wikipedia.org/wiki/CCL1"/>
    <text>CCL1 entry</text>
</comment>
<accession>P22362</accession>
<accession>B2R5G9</accession>
<accession>Q2M309</accession>